<protein>
    <recommendedName>
        <fullName>Probable quinol oxidase subunit 1</fullName>
        <ecNumber>1.10.3.-</ecNumber>
    </recommendedName>
    <alternativeName>
        <fullName>Quinol oxidase polypeptide I</fullName>
    </alternativeName>
</protein>
<accession>Q4L564</accession>
<feature type="chain" id="PRO_0000276752" description="Probable quinol oxidase subunit 1">
    <location>
        <begin position="1"/>
        <end position="662"/>
    </location>
</feature>
<feature type="transmembrane region" description="Helical" evidence="2">
    <location>
        <begin position="14"/>
        <end position="34"/>
    </location>
</feature>
<feature type="transmembrane region" description="Helical" evidence="2">
    <location>
        <begin position="58"/>
        <end position="78"/>
    </location>
</feature>
<feature type="transmembrane region" description="Helical" evidence="2">
    <location>
        <begin position="103"/>
        <end position="123"/>
    </location>
</feature>
<feature type="transmembrane region" description="Helical" evidence="2">
    <location>
        <begin position="140"/>
        <end position="160"/>
    </location>
</feature>
<feature type="transmembrane region" description="Helical" evidence="2">
    <location>
        <begin position="187"/>
        <end position="207"/>
    </location>
</feature>
<feature type="transmembrane region" description="Helical" evidence="2">
    <location>
        <begin position="228"/>
        <end position="248"/>
    </location>
</feature>
<feature type="transmembrane region" description="Helical" evidence="2">
    <location>
        <begin position="273"/>
        <end position="293"/>
    </location>
</feature>
<feature type="transmembrane region" description="Helical" evidence="2">
    <location>
        <begin position="311"/>
        <end position="331"/>
    </location>
</feature>
<feature type="transmembrane region" description="Helical" evidence="2">
    <location>
        <begin position="336"/>
        <end position="356"/>
    </location>
</feature>
<feature type="transmembrane region" description="Helical" evidence="2">
    <location>
        <begin position="376"/>
        <end position="396"/>
    </location>
</feature>
<feature type="transmembrane region" description="Helical" evidence="2">
    <location>
        <begin position="415"/>
        <end position="435"/>
    </location>
</feature>
<feature type="transmembrane region" description="Helical" evidence="2">
    <location>
        <begin position="451"/>
        <end position="471"/>
    </location>
</feature>
<feature type="transmembrane region" description="Helical" evidence="2">
    <location>
        <begin position="492"/>
        <end position="512"/>
    </location>
</feature>
<feature type="transmembrane region" description="Helical" evidence="2">
    <location>
        <begin position="586"/>
        <end position="605"/>
    </location>
</feature>
<feature type="transmembrane region" description="Helical" evidence="2">
    <location>
        <begin position="609"/>
        <end position="628"/>
    </location>
</feature>
<feature type="binding site" description="axial binding residue" evidence="1">
    <location>
        <position position="102"/>
    </location>
    <ligand>
        <name>Fe(II)-heme a</name>
        <dbReference type="ChEBI" id="CHEBI:61715"/>
    </ligand>
    <ligandPart>
        <name>Fe</name>
        <dbReference type="ChEBI" id="CHEBI:18248"/>
    </ligandPart>
</feature>
<feature type="binding site" evidence="1">
    <location>
        <position position="279"/>
    </location>
    <ligand>
        <name>Cu cation</name>
        <dbReference type="ChEBI" id="CHEBI:23378"/>
        <label>B</label>
    </ligand>
</feature>
<feature type="binding site" evidence="1">
    <location>
        <position position="283"/>
    </location>
    <ligand>
        <name>Cu cation</name>
        <dbReference type="ChEBI" id="CHEBI:23378"/>
        <label>B</label>
    </ligand>
</feature>
<feature type="binding site" evidence="1">
    <location>
        <position position="328"/>
    </location>
    <ligand>
        <name>Cu cation</name>
        <dbReference type="ChEBI" id="CHEBI:23378"/>
        <label>B</label>
    </ligand>
</feature>
<feature type="binding site" evidence="1">
    <location>
        <position position="329"/>
    </location>
    <ligand>
        <name>Cu cation</name>
        <dbReference type="ChEBI" id="CHEBI:23378"/>
        <label>B</label>
    </ligand>
</feature>
<feature type="binding site" description="axial binding residue" evidence="1">
    <location>
        <position position="414"/>
    </location>
    <ligand>
        <name>heme a3</name>
        <dbReference type="ChEBI" id="CHEBI:83282"/>
    </ligand>
    <ligandPart>
        <name>Fe</name>
        <dbReference type="ChEBI" id="CHEBI:18248"/>
    </ligandPart>
</feature>
<feature type="binding site" description="axial binding residue" evidence="1">
    <location>
        <position position="416"/>
    </location>
    <ligand>
        <name>Fe(II)-heme a</name>
        <dbReference type="ChEBI" id="CHEBI:61715"/>
    </ligand>
    <ligandPart>
        <name>Fe</name>
        <dbReference type="ChEBI" id="CHEBI:18248"/>
    </ligandPart>
</feature>
<feature type="cross-link" description="1'-histidyl-3'-tyrosine (His-Tyr)" evidence="1">
    <location>
        <begin position="279"/>
        <end position="283"/>
    </location>
</feature>
<reference key="1">
    <citation type="journal article" date="2005" name="J. Bacteriol.">
        <title>Whole-genome sequencing of Staphylococcus haemolyticus uncovers the extreme plasticity of its genome and the evolution of human-colonizing staphylococcal species.</title>
        <authorList>
            <person name="Takeuchi F."/>
            <person name="Watanabe S."/>
            <person name="Baba T."/>
            <person name="Yuzawa H."/>
            <person name="Ito T."/>
            <person name="Morimoto Y."/>
            <person name="Kuroda M."/>
            <person name="Cui L."/>
            <person name="Takahashi M."/>
            <person name="Ankai A."/>
            <person name="Baba S."/>
            <person name="Fukui S."/>
            <person name="Lee J.C."/>
            <person name="Hiramatsu K."/>
        </authorList>
    </citation>
    <scope>NUCLEOTIDE SEQUENCE [LARGE SCALE GENOMIC DNA]</scope>
    <source>
        <strain>JCSC1435</strain>
    </source>
</reference>
<name>QOX1_STAHJ</name>
<proteinExistence type="inferred from homology"/>
<keyword id="KW-1003">Cell membrane</keyword>
<keyword id="KW-0186">Copper</keyword>
<keyword id="KW-0249">Electron transport</keyword>
<keyword id="KW-0349">Heme</keyword>
<keyword id="KW-0375">Hydrogen ion transport</keyword>
<keyword id="KW-0406">Ion transport</keyword>
<keyword id="KW-0408">Iron</keyword>
<keyword id="KW-0472">Membrane</keyword>
<keyword id="KW-0479">Metal-binding</keyword>
<keyword id="KW-0560">Oxidoreductase</keyword>
<keyword id="KW-0679">Respiratory chain</keyword>
<keyword id="KW-0812">Transmembrane</keyword>
<keyword id="KW-1133">Transmembrane helix</keyword>
<keyword id="KW-0813">Transport</keyword>
<sequence>MNFPWDQLLVKGNWMITMAQIGAPFLVIGLIAVITYFKLWKYLYKEWFTSVDHKKIGLMYLICAVLMFVRGGIDALLLRTQLTIPDNTFLESNHYNEIFSTHGVIMIIFMAMPFVFGLWNVVVPLQIGARDVAFPVMNNISFWLFFVGMILFNLSFIIGGSPAAGWTNYAPLAGEFSPGPGVNYYLVAIQISGIGTLMTGINFFVTILRCKTPTMKFMQMPMFTVTTFITTLIVILAFPVFTVVLALMTFDRVFGTAFFTVADGGMPMLWANFFWVWGHPEVYIVILPAFGIYSEIIPTFARKRLFGHQSMVWATAGIAFLSFLVWVHHFFTMGNGALINSFFSISTMLIGVPTGVKLFNWLLTLYKGRITFESPMLFSLAFIPNFLLGGVTGVMLAMASADYQYHNTYFLVAHFHYTLVTGVVFACLAGLIFWYPKMMGYKLNEKLNAWCFWLFMIGFNVCFLPQFILGLDGMPRRLYTYMPSDGWWLLNVISTIGALLMAVGFLFLVVSIVYSHIKAPREATGDNWDGLGRTLEWSTASAIPPKYNFAITPDWNDYDTFVDMKEHGRHYLDNHNYKDIHMPNNTHTGVIMGIFMLLGGFFLIFETVIPAAICLVGILGSLVYQSFVQDHGYHIPASEVAENEARLREARIKEREAVGHES</sequence>
<organism>
    <name type="scientific">Staphylococcus haemolyticus (strain JCSC1435)</name>
    <dbReference type="NCBI Taxonomy" id="279808"/>
    <lineage>
        <taxon>Bacteria</taxon>
        <taxon>Bacillati</taxon>
        <taxon>Bacillota</taxon>
        <taxon>Bacilli</taxon>
        <taxon>Bacillales</taxon>
        <taxon>Staphylococcaceae</taxon>
        <taxon>Staphylococcus</taxon>
    </lineage>
</organism>
<dbReference type="EC" id="1.10.3.-"/>
<dbReference type="EMBL" id="AP006716">
    <property type="protein sequence ID" value="BAE05211.1"/>
    <property type="molecule type" value="Genomic_DNA"/>
</dbReference>
<dbReference type="RefSeq" id="WP_011276174.1">
    <property type="nucleotide sequence ID" value="NC_007168.1"/>
</dbReference>
<dbReference type="SMR" id="Q4L564"/>
<dbReference type="GeneID" id="93781266"/>
<dbReference type="KEGG" id="sha:SH1902"/>
<dbReference type="eggNOG" id="COG0843">
    <property type="taxonomic scope" value="Bacteria"/>
</dbReference>
<dbReference type="HOGENOM" id="CLU_011899_7_1_9"/>
<dbReference type="OrthoDB" id="9759913at2"/>
<dbReference type="UniPathway" id="UPA00705"/>
<dbReference type="Proteomes" id="UP000000543">
    <property type="component" value="Chromosome"/>
</dbReference>
<dbReference type="GO" id="GO:0005886">
    <property type="term" value="C:plasma membrane"/>
    <property type="evidence" value="ECO:0007669"/>
    <property type="project" value="UniProtKB-SubCell"/>
</dbReference>
<dbReference type="GO" id="GO:0005507">
    <property type="term" value="F:copper ion binding"/>
    <property type="evidence" value="ECO:0007669"/>
    <property type="project" value="InterPro"/>
</dbReference>
<dbReference type="GO" id="GO:0004129">
    <property type="term" value="F:cytochrome-c oxidase activity"/>
    <property type="evidence" value="ECO:0007669"/>
    <property type="project" value="InterPro"/>
</dbReference>
<dbReference type="GO" id="GO:0020037">
    <property type="term" value="F:heme binding"/>
    <property type="evidence" value="ECO:0007669"/>
    <property type="project" value="InterPro"/>
</dbReference>
<dbReference type="GO" id="GO:0016682">
    <property type="term" value="F:oxidoreductase activity, acting on diphenols and related substances as donors, oxygen as acceptor"/>
    <property type="evidence" value="ECO:0007669"/>
    <property type="project" value="InterPro"/>
</dbReference>
<dbReference type="GO" id="GO:0015990">
    <property type="term" value="P:electron transport coupled proton transport"/>
    <property type="evidence" value="ECO:0007669"/>
    <property type="project" value="TreeGrafter"/>
</dbReference>
<dbReference type="GO" id="GO:0006119">
    <property type="term" value="P:oxidative phosphorylation"/>
    <property type="evidence" value="ECO:0007669"/>
    <property type="project" value="UniProtKB-UniPathway"/>
</dbReference>
<dbReference type="GO" id="GO:0022904">
    <property type="term" value="P:respiratory electron transport chain"/>
    <property type="evidence" value="ECO:0007669"/>
    <property type="project" value="TreeGrafter"/>
</dbReference>
<dbReference type="CDD" id="cd01662">
    <property type="entry name" value="Ubiquinol_Oxidase_I"/>
    <property type="match status" value="1"/>
</dbReference>
<dbReference type="FunFam" id="1.20.210.10:FF:000002">
    <property type="entry name" value="Cytochrome o ubiquinol oxidase, subunit I"/>
    <property type="match status" value="1"/>
</dbReference>
<dbReference type="Gene3D" id="1.20.210.10">
    <property type="entry name" value="Cytochrome c oxidase-like, subunit I domain"/>
    <property type="match status" value="1"/>
</dbReference>
<dbReference type="InterPro" id="IPR023616">
    <property type="entry name" value="Cyt_c_oxase-like_su1_dom"/>
</dbReference>
<dbReference type="InterPro" id="IPR036927">
    <property type="entry name" value="Cyt_c_oxase-like_su1_sf"/>
</dbReference>
<dbReference type="InterPro" id="IPR000883">
    <property type="entry name" value="Cyt_C_Oxase_1"/>
</dbReference>
<dbReference type="InterPro" id="IPR023615">
    <property type="entry name" value="Cyt_c_Oxase_su1_BS"/>
</dbReference>
<dbReference type="InterPro" id="IPR014233">
    <property type="entry name" value="QoxB"/>
</dbReference>
<dbReference type="NCBIfam" id="TIGR02882">
    <property type="entry name" value="QoxB"/>
    <property type="match status" value="1"/>
</dbReference>
<dbReference type="PANTHER" id="PTHR10422:SF35">
    <property type="entry name" value="CYTOCHROME BO(3) UBIQUINOL OXIDASE SUBUNIT 1"/>
    <property type="match status" value="1"/>
</dbReference>
<dbReference type="PANTHER" id="PTHR10422">
    <property type="entry name" value="CYTOCHROME C OXIDASE SUBUNIT 1"/>
    <property type="match status" value="1"/>
</dbReference>
<dbReference type="Pfam" id="PF00115">
    <property type="entry name" value="COX1"/>
    <property type="match status" value="1"/>
</dbReference>
<dbReference type="PRINTS" id="PR01165">
    <property type="entry name" value="CYCOXIDASEI"/>
</dbReference>
<dbReference type="SUPFAM" id="SSF81442">
    <property type="entry name" value="Cytochrome c oxidase subunit I-like"/>
    <property type="match status" value="1"/>
</dbReference>
<dbReference type="PROSITE" id="PS50855">
    <property type="entry name" value="COX1"/>
    <property type="match status" value="1"/>
</dbReference>
<dbReference type="PROSITE" id="PS00077">
    <property type="entry name" value="COX1_CUB"/>
    <property type="match status" value="1"/>
</dbReference>
<comment type="function">
    <text evidence="1">Catalyzes quinol oxidation with the concomitant reduction of oxygen to water.</text>
</comment>
<comment type="catalytic activity">
    <reaction>
        <text>2 a quinol + O2 = 2 a quinone + 2 H2O</text>
        <dbReference type="Rhea" id="RHEA:55376"/>
        <dbReference type="ChEBI" id="CHEBI:15377"/>
        <dbReference type="ChEBI" id="CHEBI:15379"/>
        <dbReference type="ChEBI" id="CHEBI:24646"/>
        <dbReference type="ChEBI" id="CHEBI:132124"/>
    </reaction>
</comment>
<comment type="cofactor">
    <cofactor evidence="1">
        <name>Cu cation</name>
        <dbReference type="ChEBI" id="CHEBI:23378"/>
    </cofactor>
    <text evidence="1">Binds a copper B center.</text>
</comment>
<comment type="cofactor">
    <cofactor evidence="1">
        <name>ferriheme a</name>
        <dbReference type="ChEBI" id="CHEBI:60532"/>
    </cofactor>
</comment>
<comment type="cofactor">
    <text evidence="1">Heme A3.</text>
</comment>
<comment type="pathway">
    <text>Energy metabolism; oxidative phosphorylation.</text>
</comment>
<comment type="subcellular location">
    <subcellularLocation>
        <location evidence="1">Cell membrane</location>
        <topology evidence="1">Multi-pass membrane protein</topology>
    </subcellularLocation>
</comment>
<comment type="similarity">
    <text evidence="3">Belongs to the heme-copper respiratory oxidase family.</text>
</comment>
<gene>
    <name type="primary">qoxB</name>
    <name type="ordered locus">SH1902</name>
</gene>
<evidence type="ECO:0000250" key="1"/>
<evidence type="ECO:0000255" key="2"/>
<evidence type="ECO:0000305" key="3"/>